<accession>B4SCC0</accession>
<gene>
    <name evidence="1" type="primary">hisG</name>
    <name type="ordered locus">Ppha_0371</name>
</gene>
<reference key="1">
    <citation type="submission" date="2008-06" db="EMBL/GenBank/DDBJ databases">
        <title>Complete sequence of Pelodictyon phaeoclathratiforme BU-1.</title>
        <authorList>
            <consortium name="US DOE Joint Genome Institute"/>
            <person name="Lucas S."/>
            <person name="Copeland A."/>
            <person name="Lapidus A."/>
            <person name="Glavina del Rio T."/>
            <person name="Dalin E."/>
            <person name="Tice H."/>
            <person name="Bruce D."/>
            <person name="Goodwin L."/>
            <person name="Pitluck S."/>
            <person name="Schmutz J."/>
            <person name="Larimer F."/>
            <person name="Land M."/>
            <person name="Hauser L."/>
            <person name="Kyrpides N."/>
            <person name="Mikhailova N."/>
            <person name="Liu Z."/>
            <person name="Li T."/>
            <person name="Zhao F."/>
            <person name="Overmann J."/>
            <person name="Bryant D.A."/>
            <person name="Richardson P."/>
        </authorList>
    </citation>
    <scope>NUCLEOTIDE SEQUENCE [LARGE SCALE GENOMIC DNA]</scope>
    <source>
        <strain>DSM 5477 / BU-1</strain>
    </source>
</reference>
<proteinExistence type="inferred from homology"/>
<keyword id="KW-0028">Amino-acid biosynthesis</keyword>
<keyword id="KW-0067">ATP-binding</keyword>
<keyword id="KW-0963">Cytoplasm</keyword>
<keyword id="KW-0328">Glycosyltransferase</keyword>
<keyword id="KW-0368">Histidine biosynthesis</keyword>
<keyword id="KW-0460">Magnesium</keyword>
<keyword id="KW-0479">Metal-binding</keyword>
<keyword id="KW-0547">Nucleotide-binding</keyword>
<keyword id="KW-1185">Reference proteome</keyword>
<keyword id="KW-0808">Transferase</keyword>
<evidence type="ECO:0000255" key="1">
    <source>
        <dbReference type="HAMAP-Rule" id="MF_00079"/>
    </source>
</evidence>
<sequence length="294" mass="32474">MDSINQVLKLGLPKGSLQDSTIDLFAQAGFHFSVQSRSYFPSIDDDELEAILIRAQEMAHYVELGAFDVGLTGKDWIIETDADVVEVADLVYSKASMRPVRWVLCVPESSTVRSVKDLEGKHIATEVVNITRKYLAKNGVNAMVEFSWGATEVKPPDLADAIVEVTETGSSLRANKLRIVDTILESNTKLIANKASWNDPWKREKIENMAMLLLGAINAQGKVGLKMNAPKSAIDKILAIIPALRQPTISSLAEEQWVALEVIVSEKTVRKLIPELKRAGAEGIFEYNINKLID</sequence>
<protein>
    <recommendedName>
        <fullName evidence="1">ATP phosphoribosyltransferase</fullName>
        <shortName evidence="1">ATP-PRT</shortName>
        <shortName evidence="1">ATP-PRTase</shortName>
        <ecNumber evidence="1">2.4.2.17</ecNumber>
    </recommendedName>
</protein>
<feature type="chain" id="PRO_1000092740" description="ATP phosphoribosyltransferase">
    <location>
        <begin position="1"/>
        <end position="294"/>
    </location>
</feature>
<organism>
    <name type="scientific">Pelodictyon phaeoclathratiforme (strain DSM 5477 / BU-1)</name>
    <dbReference type="NCBI Taxonomy" id="324925"/>
    <lineage>
        <taxon>Bacteria</taxon>
        <taxon>Pseudomonadati</taxon>
        <taxon>Chlorobiota</taxon>
        <taxon>Chlorobiia</taxon>
        <taxon>Chlorobiales</taxon>
        <taxon>Chlorobiaceae</taxon>
        <taxon>Chlorobium/Pelodictyon group</taxon>
        <taxon>Pelodictyon</taxon>
    </lineage>
</organism>
<name>HIS1_PELPB</name>
<comment type="function">
    <text evidence="1">Catalyzes the condensation of ATP and 5-phosphoribose 1-diphosphate to form N'-(5'-phosphoribosyl)-ATP (PR-ATP). Has a crucial role in the pathway because the rate of histidine biosynthesis seems to be controlled primarily by regulation of HisG enzymatic activity.</text>
</comment>
<comment type="catalytic activity">
    <reaction evidence="1">
        <text>1-(5-phospho-beta-D-ribosyl)-ATP + diphosphate = 5-phospho-alpha-D-ribose 1-diphosphate + ATP</text>
        <dbReference type="Rhea" id="RHEA:18473"/>
        <dbReference type="ChEBI" id="CHEBI:30616"/>
        <dbReference type="ChEBI" id="CHEBI:33019"/>
        <dbReference type="ChEBI" id="CHEBI:58017"/>
        <dbReference type="ChEBI" id="CHEBI:73183"/>
        <dbReference type="EC" id="2.4.2.17"/>
    </reaction>
</comment>
<comment type="cofactor">
    <cofactor evidence="1">
        <name>Mg(2+)</name>
        <dbReference type="ChEBI" id="CHEBI:18420"/>
    </cofactor>
</comment>
<comment type="activity regulation">
    <text evidence="1">Feedback inhibited by histidine.</text>
</comment>
<comment type="pathway">
    <text evidence="1">Amino-acid biosynthesis; L-histidine biosynthesis; L-histidine from 5-phospho-alpha-D-ribose 1-diphosphate: step 1/9.</text>
</comment>
<comment type="subcellular location">
    <subcellularLocation>
        <location evidence="1">Cytoplasm</location>
    </subcellularLocation>
</comment>
<comment type="similarity">
    <text evidence="1">Belongs to the ATP phosphoribosyltransferase family. Long subfamily.</text>
</comment>
<dbReference type="EC" id="2.4.2.17" evidence="1"/>
<dbReference type="EMBL" id="CP001110">
    <property type="protein sequence ID" value="ACF42700.1"/>
    <property type="molecule type" value="Genomic_DNA"/>
</dbReference>
<dbReference type="RefSeq" id="WP_012507195.1">
    <property type="nucleotide sequence ID" value="NC_011060.1"/>
</dbReference>
<dbReference type="SMR" id="B4SCC0"/>
<dbReference type="STRING" id="324925.Ppha_0371"/>
<dbReference type="KEGG" id="pph:Ppha_0371"/>
<dbReference type="eggNOG" id="COG0040">
    <property type="taxonomic scope" value="Bacteria"/>
</dbReference>
<dbReference type="HOGENOM" id="CLU_038115_1_1_10"/>
<dbReference type="OrthoDB" id="9801867at2"/>
<dbReference type="UniPathway" id="UPA00031">
    <property type="reaction ID" value="UER00006"/>
</dbReference>
<dbReference type="Proteomes" id="UP000002724">
    <property type="component" value="Chromosome"/>
</dbReference>
<dbReference type="GO" id="GO:0005737">
    <property type="term" value="C:cytoplasm"/>
    <property type="evidence" value="ECO:0007669"/>
    <property type="project" value="UniProtKB-SubCell"/>
</dbReference>
<dbReference type="GO" id="GO:0005524">
    <property type="term" value="F:ATP binding"/>
    <property type="evidence" value="ECO:0007669"/>
    <property type="project" value="UniProtKB-KW"/>
</dbReference>
<dbReference type="GO" id="GO:0003879">
    <property type="term" value="F:ATP phosphoribosyltransferase activity"/>
    <property type="evidence" value="ECO:0007669"/>
    <property type="project" value="UniProtKB-UniRule"/>
</dbReference>
<dbReference type="GO" id="GO:0000287">
    <property type="term" value="F:magnesium ion binding"/>
    <property type="evidence" value="ECO:0007669"/>
    <property type="project" value="UniProtKB-UniRule"/>
</dbReference>
<dbReference type="GO" id="GO:0000105">
    <property type="term" value="P:L-histidine biosynthetic process"/>
    <property type="evidence" value="ECO:0007669"/>
    <property type="project" value="UniProtKB-UniRule"/>
</dbReference>
<dbReference type="CDD" id="cd13593">
    <property type="entry name" value="PBP2_HisGL3"/>
    <property type="match status" value="1"/>
</dbReference>
<dbReference type="FunFam" id="3.30.70.120:FF:000002">
    <property type="entry name" value="ATP phosphoribosyltransferase"/>
    <property type="match status" value="1"/>
</dbReference>
<dbReference type="Gene3D" id="3.30.70.120">
    <property type="match status" value="1"/>
</dbReference>
<dbReference type="Gene3D" id="3.40.190.10">
    <property type="entry name" value="Periplasmic binding protein-like II"/>
    <property type="match status" value="2"/>
</dbReference>
<dbReference type="HAMAP" id="MF_00079">
    <property type="entry name" value="HisG_Long"/>
    <property type="match status" value="1"/>
</dbReference>
<dbReference type="InterPro" id="IPR020621">
    <property type="entry name" value="ATP-PRT_HisG_long"/>
</dbReference>
<dbReference type="InterPro" id="IPR013820">
    <property type="entry name" value="ATP_PRibTrfase_cat"/>
</dbReference>
<dbReference type="InterPro" id="IPR001348">
    <property type="entry name" value="ATP_PRibTrfase_HisG"/>
</dbReference>
<dbReference type="InterPro" id="IPR013115">
    <property type="entry name" value="HisG_C"/>
</dbReference>
<dbReference type="InterPro" id="IPR011322">
    <property type="entry name" value="N-reg_PII-like_a/b"/>
</dbReference>
<dbReference type="InterPro" id="IPR015867">
    <property type="entry name" value="N-reg_PII/ATP_PRibTrfase_C"/>
</dbReference>
<dbReference type="NCBIfam" id="TIGR00070">
    <property type="entry name" value="hisG"/>
    <property type="match status" value="1"/>
</dbReference>
<dbReference type="NCBIfam" id="TIGR03455">
    <property type="entry name" value="HisG_C-term"/>
    <property type="match status" value="1"/>
</dbReference>
<dbReference type="PANTHER" id="PTHR21403:SF10">
    <property type="entry name" value="ATP PHOSPHORIBOSYLTRANSFERASE"/>
    <property type="match status" value="1"/>
</dbReference>
<dbReference type="PANTHER" id="PTHR21403">
    <property type="entry name" value="ATP PHOSPHORIBOSYLTRANSFERASE ATP-PRTASE"/>
    <property type="match status" value="1"/>
</dbReference>
<dbReference type="Pfam" id="PF01634">
    <property type="entry name" value="HisG"/>
    <property type="match status" value="1"/>
</dbReference>
<dbReference type="Pfam" id="PF08029">
    <property type="entry name" value="HisG_C"/>
    <property type="match status" value="1"/>
</dbReference>
<dbReference type="SUPFAM" id="SSF54913">
    <property type="entry name" value="GlnB-like"/>
    <property type="match status" value="1"/>
</dbReference>
<dbReference type="SUPFAM" id="SSF53850">
    <property type="entry name" value="Periplasmic binding protein-like II"/>
    <property type="match status" value="1"/>
</dbReference>